<keyword id="KW-0150">Chloroplast</keyword>
<keyword id="KW-0240">DNA-directed RNA polymerase</keyword>
<keyword id="KW-0479">Metal-binding</keyword>
<keyword id="KW-0548">Nucleotidyltransferase</keyword>
<keyword id="KW-0934">Plastid</keyword>
<keyword id="KW-1185">Reference proteome</keyword>
<keyword id="KW-0804">Transcription</keyword>
<keyword id="KW-0808">Transferase</keyword>
<keyword id="KW-0862">Zinc</keyword>
<dbReference type="EC" id="2.7.7.6" evidence="1"/>
<dbReference type="EMBL" id="EF115542">
    <property type="protein sequence ID" value="ABK79488.1"/>
    <property type="molecule type" value="Genomic_DNA"/>
</dbReference>
<dbReference type="EMBL" id="Z14983">
    <property type="protein sequence ID" value="CAA78707.1"/>
    <property type="molecule type" value="Genomic_DNA"/>
</dbReference>
<dbReference type="EMBL" id="Z14984">
    <property type="protein sequence ID" value="CAA78708.1"/>
    <property type="molecule type" value="Genomic_DNA"/>
</dbReference>
<dbReference type="PIR" id="S30925">
    <property type="entry name" value="S30925"/>
</dbReference>
<dbReference type="PIR" id="S30926">
    <property type="entry name" value="S30926"/>
</dbReference>
<dbReference type="RefSeq" id="YP_899399.1">
    <property type="nucleotide sequence ID" value="NC_008602.1"/>
</dbReference>
<dbReference type="SMR" id="Q01923"/>
<dbReference type="FunCoup" id="Q01923">
    <property type="interactions" value="30"/>
</dbReference>
<dbReference type="STRING" id="4558.Q01923"/>
<dbReference type="EnsemblPlants" id="EES02995">
    <property type="protein sequence ID" value="EES02995"/>
    <property type="gene ID" value="SORBI_3003G169400"/>
</dbReference>
<dbReference type="GeneID" id="4549110"/>
<dbReference type="Gramene" id="EES02995">
    <property type="protein sequence ID" value="EES02995"/>
    <property type="gene ID" value="SORBI_3003G169400"/>
</dbReference>
<dbReference type="KEGG" id="sbi:4549110"/>
<dbReference type="KEGG" id="sbi:8074931"/>
<dbReference type="eggNOG" id="ENOG502QPYA">
    <property type="taxonomic scope" value="Eukaryota"/>
</dbReference>
<dbReference type="HOGENOM" id="CLU_000524_1_0_1"/>
<dbReference type="InParanoid" id="Q01923"/>
<dbReference type="OMA" id="IEGKSDW"/>
<dbReference type="OrthoDB" id="725702at2759"/>
<dbReference type="Proteomes" id="UP000000768">
    <property type="component" value="Chloroplast"/>
</dbReference>
<dbReference type="ExpressionAtlas" id="Q01923">
    <property type="expression patterns" value="baseline"/>
</dbReference>
<dbReference type="GO" id="GO:0009507">
    <property type="term" value="C:chloroplast"/>
    <property type="evidence" value="ECO:0007669"/>
    <property type="project" value="UniProtKB-SubCell"/>
</dbReference>
<dbReference type="GO" id="GO:0000428">
    <property type="term" value="C:DNA-directed RNA polymerase complex"/>
    <property type="evidence" value="ECO:0007669"/>
    <property type="project" value="UniProtKB-KW"/>
</dbReference>
<dbReference type="GO" id="GO:0005739">
    <property type="term" value="C:mitochondrion"/>
    <property type="evidence" value="ECO:0007669"/>
    <property type="project" value="GOC"/>
</dbReference>
<dbReference type="GO" id="GO:0003677">
    <property type="term" value="F:DNA binding"/>
    <property type="evidence" value="ECO:0007669"/>
    <property type="project" value="UniProtKB-UniRule"/>
</dbReference>
<dbReference type="GO" id="GO:0003899">
    <property type="term" value="F:DNA-directed RNA polymerase activity"/>
    <property type="evidence" value="ECO:0007669"/>
    <property type="project" value="UniProtKB-UniRule"/>
</dbReference>
<dbReference type="GO" id="GO:0008270">
    <property type="term" value="F:zinc ion binding"/>
    <property type="evidence" value="ECO:0007669"/>
    <property type="project" value="UniProtKB-UniRule"/>
</dbReference>
<dbReference type="GO" id="GO:0006351">
    <property type="term" value="P:DNA-templated transcription"/>
    <property type="evidence" value="ECO:0007669"/>
    <property type="project" value="UniProtKB-UniRule"/>
</dbReference>
<dbReference type="CDD" id="cd02655">
    <property type="entry name" value="RNAP_beta'_C"/>
    <property type="match status" value="1"/>
</dbReference>
<dbReference type="FunFam" id="1.10.132.30:FF:000002">
    <property type="entry name" value="DNA-directed RNA polymerase subunit beta"/>
    <property type="match status" value="1"/>
</dbReference>
<dbReference type="Gene3D" id="1.10.132.30">
    <property type="match status" value="1"/>
</dbReference>
<dbReference type="Gene3D" id="1.10.150.390">
    <property type="match status" value="1"/>
</dbReference>
<dbReference type="Gene3D" id="1.10.1790.20">
    <property type="match status" value="1"/>
</dbReference>
<dbReference type="Gene3D" id="1.10.274.100">
    <property type="entry name" value="RNA polymerase Rpb1, domain 3"/>
    <property type="match status" value="1"/>
</dbReference>
<dbReference type="HAMAP" id="MF_01324">
    <property type="entry name" value="RNApol_bact_RpoC2"/>
    <property type="match status" value="1"/>
</dbReference>
<dbReference type="InterPro" id="IPR012756">
    <property type="entry name" value="DNA-dir_RpoC2_beta_pp"/>
</dbReference>
<dbReference type="InterPro" id="IPR050254">
    <property type="entry name" value="RNA_pol_beta''_euk"/>
</dbReference>
<dbReference type="InterPro" id="IPR042102">
    <property type="entry name" value="RNA_pol_Rpb1_3_sf"/>
</dbReference>
<dbReference type="InterPro" id="IPR007083">
    <property type="entry name" value="RNA_pol_Rpb1_4"/>
</dbReference>
<dbReference type="InterPro" id="IPR007081">
    <property type="entry name" value="RNA_pol_Rpb1_5"/>
</dbReference>
<dbReference type="InterPro" id="IPR038120">
    <property type="entry name" value="Rpb1_funnel_sf"/>
</dbReference>
<dbReference type="NCBIfam" id="TIGR02388">
    <property type="entry name" value="rpoC2_cyan"/>
    <property type="match status" value="1"/>
</dbReference>
<dbReference type="PANTHER" id="PTHR34995">
    <property type="entry name" value="DNA-DIRECTED RNA POLYMERASE SUBUNIT BETA"/>
    <property type="match status" value="1"/>
</dbReference>
<dbReference type="PANTHER" id="PTHR34995:SF1">
    <property type="entry name" value="DNA-DIRECTED RNA POLYMERASE SUBUNIT BETA"/>
    <property type="match status" value="1"/>
</dbReference>
<dbReference type="Pfam" id="PF05000">
    <property type="entry name" value="RNA_pol_Rpb1_4"/>
    <property type="match status" value="1"/>
</dbReference>
<dbReference type="Pfam" id="PF04998">
    <property type="entry name" value="RNA_pol_Rpb1_5"/>
    <property type="match status" value="2"/>
</dbReference>
<dbReference type="SUPFAM" id="SSF64484">
    <property type="entry name" value="beta and beta-prime subunits of DNA dependent RNA-polymerase"/>
    <property type="match status" value="1"/>
</dbReference>
<reference key="1">
    <citation type="journal article" date="2007" name="Theor. Appl. Genet.">
        <title>Complete chloroplast genome sequences of Hordeum vulgare, Sorghum bicolor and Agrostis stolonifera, and comparative analyses with other grass genomes.</title>
        <authorList>
            <person name="Saski C."/>
            <person name="Lee S.-B."/>
            <person name="Fjellheim S."/>
            <person name="Guda C."/>
            <person name="Jansen R.K."/>
            <person name="Luo H."/>
            <person name="Tomkins J."/>
            <person name="Rognli O.A."/>
            <person name="Daniell H."/>
            <person name="Clarke J.L."/>
        </authorList>
    </citation>
    <scope>NUCLEOTIDE SEQUENCE [LARGE SCALE GENOMIC DNA]</scope>
    <source>
        <strain>cv. BTx623</strain>
    </source>
</reference>
<reference key="2">
    <citation type="journal article" date="1993" name="Mol. Gen. Genet.">
        <title>A chloroplast DNA deletion located in RNA polymerase gene rpoC2 in CMS lines of sorghum.</title>
        <authorList>
            <person name="Chen Z."/>
            <person name="Muthukrishnan S."/>
            <person name="Liang G.H."/>
            <person name="Schertz K.F."/>
            <person name="Hart G.E."/>
        </authorList>
    </citation>
    <scope>NUCLEOTIDE SEQUENCE [GENOMIC DNA] OF 409-843</scope>
    <source>
        <tissue>Leaf</tissue>
    </source>
</reference>
<organism>
    <name type="scientific">Sorghum bicolor</name>
    <name type="common">Sorghum</name>
    <name type="synonym">Sorghum vulgare</name>
    <dbReference type="NCBI Taxonomy" id="4558"/>
    <lineage>
        <taxon>Eukaryota</taxon>
        <taxon>Viridiplantae</taxon>
        <taxon>Streptophyta</taxon>
        <taxon>Embryophyta</taxon>
        <taxon>Tracheophyta</taxon>
        <taxon>Spermatophyta</taxon>
        <taxon>Magnoliopsida</taxon>
        <taxon>Liliopsida</taxon>
        <taxon>Poales</taxon>
        <taxon>Poaceae</taxon>
        <taxon>PACMAD clade</taxon>
        <taxon>Panicoideae</taxon>
        <taxon>Andropogonodae</taxon>
        <taxon>Andropogoneae</taxon>
        <taxon>Sorghinae</taxon>
        <taxon>Sorghum</taxon>
    </lineage>
</organism>
<evidence type="ECO:0000255" key="1">
    <source>
        <dbReference type="HAMAP-Rule" id="MF_01324"/>
    </source>
</evidence>
<evidence type="ECO:0000256" key="2">
    <source>
        <dbReference type="SAM" id="MobiDB-lite"/>
    </source>
</evidence>
<evidence type="ECO:0000305" key="3"/>
<geneLocation type="chloroplast"/>
<comment type="function">
    <text evidence="1">DNA-dependent RNA polymerase catalyzes the transcription of DNA into RNA using the four ribonucleoside triphosphates as substrates.</text>
</comment>
<comment type="catalytic activity">
    <reaction evidence="1">
        <text>RNA(n) + a ribonucleoside 5'-triphosphate = RNA(n+1) + diphosphate</text>
        <dbReference type="Rhea" id="RHEA:21248"/>
        <dbReference type="Rhea" id="RHEA-COMP:14527"/>
        <dbReference type="Rhea" id="RHEA-COMP:17342"/>
        <dbReference type="ChEBI" id="CHEBI:33019"/>
        <dbReference type="ChEBI" id="CHEBI:61557"/>
        <dbReference type="ChEBI" id="CHEBI:140395"/>
        <dbReference type="EC" id="2.7.7.6"/>
    </reaction>
</comment>
<comment type="cofactor">
    <cofactor evidence="1">
        <name>Zn(2+)</name>
        <dbReference type="ChEBI" id="CHEBI:29105"/>
    </cofactor>
    <text evidence="1">Binds 1 Zn(2+) ion per subunit.</text>
</comment>
<comment type="subunit">
    <text evidence="1">In plastids the minimal PEP RNA polymerase catalytic core is composed of four subunits: alpha, beta, beta', and beta''. When a (nuclear-encoded) sigma factor is associated with the core the holoenzyme is formed, which can initiate transcription.</text>
</comment>
<comment type="subcellular location">
    <subcellularLocation>
        <location evidence="1">Plastid</location>
        <location evidence="1">Chloroplast</location>
    </subcellularLocation>
</comment>
<comment type="similarity">
    <text evidence="1">Belongs to the RNA polymerase beta' chain family. RpoC2 subfamily.</text>
</comment>
<accession>Q01923</accession>
<accession>A1E9R6</accession>
<protein>
    <recommendedName>
        <fullName evidence="1">DNA-directed RNA polymerase subunit beta''</fullName>
        <ecNumber evidence="1">2.7.7.6</ecNumber>
    </recommendedName>
    <alternativeName>
        <fullName evidence="1">PEP</fullName>
    </alternativeName>
    <alternativeName>
        <fullName evidence="1">Plastid-encoded RNA polymerase subunit beta''</fullName>
        <shortName evidence="1">RNA polymerase subunit beta''</shortName>
    </alternativeName>
</protein>
<name>RPOC2_SORBI</name>
<gene>
    <name evidence="1" type="primary">rpoC2</name>
</gene>
<feature type="chain" id="PRO_0000067949" description="DNA-directed RNA polymerase subunit beta''">
    <location>
        <begin position="1"/>
        <end position="1520"/>
    </location>
</feature>
<feature type="region of interest" description="Disordered" evidence="2">
    <location>
        <begin position="645"/>
        <end position="676"/>
    </location>
</feature>
<feature type="region of interest" description="Disordered" evidence="2">
    <location>
        <begin position="705"/>
        <end position="786"/>
    </location>
</feature>
<feature type="compositionally biased region" description="Basic and acidic residues" evidence="2">
    <location>
        <begin position="645"/>
        <end position="654"/>
    </location>
</feature>
<feature type="compositionally biased region" description="Basic and acidic residues" evidence="2">
    <location>
        <begin position="664"/>
        <end position="674"/>
    </location>
</feature>
<feature type="compositionally biased region" description="Acidic residues" evidence="2">
    <location>
        <begin position="730"/>
        <end position="748"/>
    </location>
</feature>
<feature type="compositionally biased region" description="Acidic residues" evidence="2">
    <location>
        <begin position="756"/>
        <end position="779"/>
    </location>
</feature>
<feature type="binding site" evidence="1">
    <location>
        <position position="220"/>
    </location>
    <ligand>
        <name>Zn(2+)</name>
        <dbReference type="ChEBI" id="CHEBI:29105"/>
    </ligand>
</feature>
<feature type="binding site" evidence="1">
    <location>
        <position position="296"/>
    </location>
    <ligand>
        <name>Zn(2+)</name>
        <dbReference type="ChEBI" id="CHEBI:29105"/>
    </ligand>
</feature>
<feature type="binding site" evidence="1">
    <location>
        <position position="303"/>
    </location>
    <ligand>
        <name>Zn(2+)</name>
        <dbReference type="ChEBI" id="CHEBI:29105"/>
    </ligand>
</feature>
<feature type="binding site" evidence="1">
    <location>
        <position position="306"/>
    </location>
    <ligand>
        <name>Zn(2+)</name>
        <dbReference type="ChEBI" id="CHEBI:29105"/>
    </ligand>
</feature>
<feature type="sequence conflict" description="In Ref. 2; CAA78708." evidence="3" ref="2">
    <location>
        <begin position="676"/>
        <end position="731"/>
    </location>
</feature>
<proteinExistence type="inferred from homology"/>
<sequence>MAERANLVFHNKEIDGTAMKRLISRLIDHFGMGYTSHILDQIKTLGFHQATTTSISLGIEDLLTIPSKGWLVQDAEQQSFLLEKHYYYGAVHAVEKLRQSVEIWYATSEYLKQEMNSNFRITDPSNPVYLMSFSGARGNASQVHQLVGMRGLMADPQGQMIDLPIQSNLREGLSLTEYIISCYGARKGVVDTAVRTADAGYLTRRLVEVVQHIIVRRRDCGTIQGISVSPQNGMTEKLFVQTLIGRVLADDIYIGSRCIASRNQDIGIGLVNRFITAFRAQPFRAQPIYIRTPFTCRSTSWICQLCYGRSPTHGDLVELGEAVGIIAGQSIGEPGTQLTLRTFHTGGVFTGGTADLIRSPSNGKIQFNEDLVHPTRTRHGQPAFLCYIDLHVTIQSQDILHSVNIPLKSLILVQNDQYVESEQVIAEIRAGTSTLHFKEKVQKHIYSESDGEMHWSTDVYHAPEYQYGNLRRLPKTSHLWILSVSMCRSSIASFSLHKDQDQMNTYSFSVDGRYIFDFSMANDQVSHRLLDTFGKKDREILDYLTPDRIVSNGHWNCFYPSILQDNSDLLAKKRRNRFAVPLQYHQEQEKERISCLGISMEIPFMGVLRRNTIFAYFDDPRYRKDKRGSGIVKFRYRTLEEEYRTREEEYRTREEDSEDEYESPENKYRTREGEGEYEILEDEYRTLEDEYETLEDEYGILEDEYRTLEKDSEEEYGSLENKYRTREGEGEYEILEEDSEEEYGSSEDGSEKEYGTLEEDSEEDSEEDSEDEYGSPEEDSILKKEGFIEHRGTKEFSLKYQKEVDRFFFILQELHILPRSSSLKVLDNSIIGVDTQLTKNTRSRLGGLVRVKRKKSHTELKIFSGDIHFPEEADKILGGSLIPPEREKKDSKESKKRKNWVYVQRKKILKSKEKYFVSVRPAVSYEMDEGRNLATLFPQDLLQEEDNLQLRLVNFISHENSKLTQRIYHTNSQFVRTCLVVNWEQEVKEGARASLVEVRTNDLIRDFLRIELVKSTISYTRRRYDRTSVGLIPNNRLDRNNTNSFYSKAKIQSLSQHQEVIGTLLNRNKEYPSLMILLASNCSRIGLFKNSKYPNAVKESNPRIPIRDVFGLLGVIVPSISNFSSSYYLLTHNQILLKKYLFLDNLKQTFQVLQGLKYSLIDENQRISNFGSNIMLEPFHLNWHFLHHDSWEETLAIIHLGQFICENLCLFKSHIKKSGQIFIVNMDSFVLRAAKPYLATIGATVHGHYGKILYKGDRLVTFIYEKSRSSDITQGLPKVEQIFEARSIDSLSPNLERRIEDWNERIPRILGVPWGFLIGAELTIAQSRISLVNKIQKVYRSQGVQIHNRHIEIIIRQVTSKVRVSEDGMSNVFLPGELIGLLRAERAGRALDESIYYRAILLGITRASLNTQSFISEASFQETARVLAKAALRGRIDWLKGLKENVVLGGIIPVGTGFQKFVHRSPQDKNLYFEIKKKNLFASEMRDILFLHTELVSSDSDVTNNFYETSETPFTPIYTI</sequence>